<protein>
    <recommendedName>
        <fullName evidence="1">Guanylate kinase</fullName>
        <ecNumber evidence="1">2.7.4.8</ecNumber>
    </recommendedName>
    <alternativeName>
        <fullName evidence="1">GMP kinase</fullName>
    </alternativeName>
</protein>
<sequence>MVQGTLYIVSAPSGAGKSSLIQALLKTQPLYDTQVSISHTTRAKRPGENHGEHYFFVSEKEFCQMIDDDAFLEHAKVFENYYGTSRLAIEQVLATGVDVFLDIDWQGAQQIRAKMPTARSIFILPPSKTELDRRLRGRGQDSEEVIAKRMEQAVAEMAHYAEYDYLIVNDDFNLALSDLKTIIRAERLRLGRQKQRHDALISKLLAD</sequence>
<gene>
    <name evidence="1" type="primary">gmk</name>
    <name type="ordered locus">YPA_3502</name>
</gene>
<name>KGUA_YERPA</name>
<proteinExistence type="inferred from homology"/>
<evidence type="ECO:0000255" key="1">
    <source>
        <dbReference type="HAMAP-Rule" id="MF_00328"/>
    </source>
</evidence>
<feature type="chain" id="PRO_0000266439" description="Guanylate kinase">
    <location>
        <begin position="1"/>
        <end position="207"/>
    </location>
</feature>
<feature type="domain" description="Guanylate kinase-like" evidence="1">
    <location>
        <begin position="4"/>
        <end position="184"/>
    </location>
</feature>
<feature type="binding site" evidence="1">
    <location>
        <begin position="11"/>
        <end position="18"/>
    </location>
    <ligand>
        <name>ATP</name>
        <dbReference type="ChEBI" id="CHEBI:30616"/>
    </ligand>
</feature>
<accession>Q1C258</accession>
<organism>
    <name type="scientific">Yersinia pestis bv. Antiqua (strain Antiqua)</name>
    <dbReference type="NCBI Taxonomy" id="360102"/>
    <lineage>
        <taxon>Bacteria</taxon>
        <taxon>Pseudomonadati</taxon>
        <taxon>Pseudomonadota</taxon>
        <taxon>Gammaproteobacteria</taxon>
        <taxon>Enterobacterales</taxon>
        <taxon>Yersiniaceae</taxon>
        <taxon>Yersinia</taxon>
    </lineage>
</organism>
<keyword id="KW-0067">ATP-binding</keyword>
<keyword id="KW-0963">Cytoplasm</keyword>
<keyword id="KW-0418">Kinase</keyword>
<keyword id="KW-0547">Nucleotide-binding</keyword>
<keyword id="KW-0808">Transferase</keyword>
<comment type="function">
    <text evidence="1">Essential for recycling GMP and indirectly, cGMP.</text>
</comment>
<comment type="catalytic activity">
    <reaction evidence="1">
        <text>GMP + ATP = GDP + ADP</text>
        <dbReference type="Rhea" id="RHEA:20780"/>
        <dbReference type="ChEBI" id="CHEBI:30616"/>
        <dbReference type="ChEBI" id="CHEBI:58115"/>
        <dbReference type="ChEBI" id="CHEBI:58189"/>
        <dbReference type="ChEBI" id="CHEBI:456216"/>
        <dbReference type="EC" id="2.7.4.8"/>
    </reaction>
</comment>
<comment type="subcellular location">
    <subcellularLocation>
        <location evidence="1">Cytoplasm</location>
    </subcellularLocation>
</comment>
<comment type="similarity">
    <text evidence="1">Belongs to the guanylate kinase family.</text>
</comment>
<dbReference type="EC" id="2.7.4.8" evidence="1"/>
<dbReference type="EMBL" id="CP000308">
    <property type="protein sequence ID" value="ABG15464.1"/>
    <property type="molecule type" value="Genomic_DNA"/>
</dbReference>
<dbReference type="RefSeq" id="WP_002209000.1">
    <property type="nucleotide sequence ID" value="NZ_CP009906.1"/>
</dbReference>
<dbReference type="SMR" id="Q1C258"/>
<dbReference type="GeneID" id="96663512"/>
<dbReference type="KEGG" id="ypa:YPA_3502"/>
<dbReference type="Proteomes" id="UP000001971">
    <property type="component" value="Chromosome"/>
</dbReference>
<dbReference type="GO" id="GO:0005829">
    <property type="term" value="C:cytosol"/>
    <property type="evidence" value="ECO:0007669"/>
    <property type="project" value="TreeGrafter"/>
</dbReference>
<dbReference type="GO" id="GO:0005524">
    <property type="term" value="F:ATP binding"/>
    <property type="evidence" value="ECO:0007669"/>
    <property type="project" value="UniProtKB-UniRule"/>
</dbReference>
<dbReference type="GO" id="GO:0004385">
    <property type="term" value="F:guanylate kinase activity"/>
    <property type="evidence" value="ECO:0007669"/>
    <property type="project" value="UniProtKB-UniRule"/>
</dbReference>
<dbReference type="CDD" id="cd00071">
    <property type="entry name" value="GMPK"/>
    <property type="match status" value="1"/>
</dbReference>
<dbReference type="FunFam" id="3.40.50.300:FF:000855">
    <property type="entry name" value="Guanylate kinase"/>
    <property type="match status" value="1"/>
</dbReference>
<dbReference type="FunFam" id="3.30.63.10:FF:000002">
    <property type="entry name" value="Guanylate kinase 1"/>
    <property type="match status" value="1"/>
</dbReference>
<dbReference type="Gene3D" id="3.30.63.10">
    <property type="entry name" value="Guanylate Kinase phosphate binding domain"/>
    <property type="match status" value="1"/>
</dbReference>
<dbReference type="Gene3D" id="3.40.50.300">
    <property type="entry name" value="P-loop containing nucleotide triphosphate hydrolases"/>
    <property type="match status" value="1"/>
</dbReference>
<dbReference type="HAMAP" id="MF_00328">
    <property type="entry name" value="Guanylate_kinase"/>
    <property type="match status" value="1"/>
</dbReference>
<dbReference type="InterPro" id="IPR008145">
    <property type="entry name" value="GK/Ca_channel_bsu"/>
</dbReference>
<dbReference type="InterPro" id="IPR008144">
    <property type="entry name" value="Guanylate_kin-like_dom"/>
</dbReference>
<dbReference type="InterPro" id="IPR017665">
    <property type="entry name" value="Guanylate_kinase"/>
</dbReference>
<dbReference type="InterPro" id="IPR020590">
    <property type="entry name" value="Guanylate_kinase_CS"/>
</dbReference>
<dbReference type="InterPro" id="IPR027417">
    <property type="entry name" value="P-loop_NTPase"/>
</dbReference>
<dbReference type="NCBIfam" id="TIGR03263">
    <property type="entry name" value="guanyl_kin"/>
    <property type="match status" value="1"/>
</dbReference>
<dbReference type="PANTHER" id="PTHR23117:SF13">
    <property type="entry name" value="GUANYLATE KINASE"/>
    <property type="match status" value="1"/>
</dbReference>
<dbReference type="PANTHER" id="PTHR23117">
    <property type="entry name" value="GUANYLATE KINASE-RELATED"/>
    <property type="match status" value="1"/>
</dbReference>
<dbReference type="Pfam" id="PF00625">
    <property type="entry name" value="Guanylate_kin"/>
    <property type="match status" value="1"/>
</dbReference>
<dbReference type="SMART" id="SM00072">
    <property type="entry name" value="GuKc"/>
    <property type="match status" value="1"/>
</dbReference>
<dbReference type="SUPFAM" id="SSF52540">
    <property type="entry name" value="P-loop containing nucleoside triphosphate hydrolases"/>
    <property type="match status" value="1"/>
</dbReference>
<dbReference type="PROSITE" id="PS00856">
    <property type="entry name" value="GUANYLATE_KINASE_1"/>
    <property type="match status" value="1"/>
</dbReference>
<dbReference type="PROSITE" id="PS50052">
    <property type="entry name" value="GUANYLATE_KINASE_2"/>
    <property type="match status" value="1"/>
</dbReference>
<reference key="1">
    <citation type="journal article" date="2006" name="J. Bacteriol.">
        <title>Complete genome sequence of Yersinia pestis strains Antiqua and Nepal516: evidence of gene reduction in an emerging pathogen.</title>
        <authorList>
            <person name="Chain P.S.G."/>
            <person name="Hu P."/>
            <person name="Malfatti S.A."/>
            <person name="Radnedge L."/>
            <person name="Larimer F."/>
            <person name="Vergez L.M."/>
            <person name="Worsham P."/>
            <person name="Chu M.C."/>
            <person name="Andersen G.L."/>
        </authorList>
    </citation>
    <scope>NUCLEOTIDE SEQUENCE [LARGE SCALE GENOMIC DNA]</scope>
    <source>
        <strain>Antiqua</strain>
    </source>
</reference>